<protein>
    <recommendedName>
        <fullName>Mu-type opioid receptor</fullName>
        <shortName>M-OR-1</shortName>
        <shortName>MOR-1</shortName>
    </recommendedName>
</protein>
<reference key="1">
    <citation type="journal article" date="2004" name="Cell">
        <title>Accelerated evolution of nervous system genes in the origin of Homo sapiens.</title>
        <authorList>
            <person name="Dorus S."/>
            <person name="Vallender E.J."/>
            <person name="Evans P.D."/>
            <person name="Anderson J.R."/>
            <person name="Gilbert S.L."/>
            <person name="Mahowald M."/>
            <person name="Wyckoff G.J."/>
            <person name="Malcom C.M."/>
            <person name="Lahn B.T."/>
        </authorList>
    </citation>
    <scope>NUCLEOTIDE SEQUENCE [MRNA]</scope>
</reference>
<gene>
    <name type="primary">OPRM1</name>
</gene>
<evidence type="ECO:0000250" key="1">
    <source>
        <dbReference type="UniProtKB" id="P33535"/>
    </source>
</evidence>
<evidence type="ECO:0000250" key="2">
    <source>
        <dbReference type="UniProtKB" id="P35372"/>
    </source>
</evidence>
<evidence type="ECO:0000250" key="3">
    <source>
        <dbReference type="UniProtKB" id="P42866"/>
    </source>
</evidence>
<evidence type="ECO:0000250" key="4">
    <source>
        <dbReference type="UniProtKB" id="P97266"/>
    </source>
</evidence>
<evidence type="ECO:0000255" key="5"/>
<evidence type="ECO:0000255" key="6">
    <source>
        <dbReference type="PROSITE-ProRule" id="PRU00521"/>
    </source>
</evidence>
<evidence type="ECO:0000256" key="7">
    <source>
        <dbReference type="SAM" id="MobiDB-lite"/>
    </source>
</evidence>
<proteinExistence type="evidence at transcript level"/>
<keyword id="KW-1003">Cell membrane</keyword>
<keyword id="KW-0966">Cell projection</keyword>
<keyword id="KW-1015">Disulfide bond</keyword>
<keyword id="KW-0967">Endosome</keyword>
<keyword id="KW-0297">G-protein coupled receptor</keyword>
<keyword id="KW-0325">Glycoprotein</keyword>
<keyword id="KW-0449">Lipoprotein</keyword>
<keyword id="KW-0472">Membrane</keyword>
<keyword id="KW-0564">Palmitate</keyword>
<keyword id="KW-0597">Phosphoprotein</keyword>
<keyword id="KW-0675">Receptor</keyword>
<keyword id="KW-1185">Reference proteome</keyword>
<keyword id="KW-0807">Transducer</keyword>
<keyword id="KW-0812">Transmembrane</keyword>
<keyword id="KW-1133">Transmembrane helix</keyword>
<keyword id="KW-0832">Ubl conjugation</keyword>
<dbReference type="EMBL" id="AY665289">
    <property type="protein sequence ID" value="AAV74327.1"/>
    <property type="molecule type" value="mRNA"/>
</dbReference>
<dbReference type="RefSeq" id="NP_001029087.1">
    <property type="nucleotide sequence ID" value="NM_001033915.1"/>
</dbReference>
<dbReference type="SMR" id="Q5IS39"/>
<dbReference type="FunCoup" id="Q5IS39">
    <property type="interactions" value="1093"/>
</dbReference>
<dbReference type="STRING" id="9598.ENSPTRP00000043686"/>
<dbReference type="GlyCosmos" id="Q5IS39">
    <property type="glycosylation" value="5 sites, No reported glycans"/>
</dbReference>
<dbReference type="PaxDb" id="9598-ENSPTRP00000043686"/>
<dbReference type="GeneID" id="472165"/>
<dbReference type="KEGG" id="ptr:472165"/>
<dbReference type="CTD" id="4988"/>
<dbReference type="eggNOG" id="KOG3656">
    <property type="taxonomic scope" value="Eukaryota"/>
</dbReference>
<dbReference type="InParanoid" id="Q5IS39"/>
<dbReference type="Proteomes" id="UP000002277">
    <property type="component" value="Unplaced"/>
</dbReference>
<dbReference type="GO" id="GO:0030424">
    <property type="term" value="C:axon"/>
    <property type="evidence" value="ECO:0000250"/>
    <property type="project" value="UniProtKB"/>
</dbReference>
<dbReference type="GO" id="GO:0030425">
    <property type="term" value="C:dendrite"/>
    <property type="evidence" value="ECO:0000250"/>
    <property type="project" value="UniProtKB"/>
</dbReference>
<dbReference type="GO" id="GO:0005768">
    <property type="term" value="C:endosome"/>
    <property type="evidence" value="ECO:0000250"/>
    <property type="project" value="UniProtKB"/>
</dbReference>
<dbReference type="GO" id="GO:0043005">
    <property type="term" value="C:neuron projection"/>
    <property type="evidence" value="ECO:0000318"/>
    <property type="project" value="GO_Central"/>
</dbReference>
<dbReference type="GO" id="GO:0043204">
    <property type="term" value="C:perikaryon"/>
    <property type="evidence" value="ECO:0007669"/>
    <property type="project" value="UniProtKB-SubCell"/>
</dbReference>
<dbReference type="GO" id="GO:0005886">
    <property type="term" value="C:plasma membrane"/>
    <property type="evidence" value="ECO:0000250"/>
    <property type="project" value="UniProtKB"/>
</dbReference>
<dbReference type="GO" id="GO:0045202">
    <property type="term" value="C:synapse"/>
    <property type="evidence" value="ECO:0007669"/>
    <property type="project" value="GOC"/>
</dbReference>
<dbReference type="GO" id="GO:0004979">
    <property type="term" value="F:beta-endorphin receptor activity"/>
    <property type="evidence" value="ECO:0000318"/>
    <property type="project" value="GO_Central"/>
</dbReference>
<dbReference type="GO" id="GO:0004930">
    <property type="term" value="F:G protein-coupled receptor activity"/>
    <property type="evidence" value="ECO:0000250"/>
    <property type="project" value="UniProtKB"/>
</dbReference>
<dbReference type="GO" id="GO:0001965">
    <property type="term" value="F:G-protein alpha-subunit binding"/>
    <property type="evidence" value="ECO:0000250"/>
    <property type="project" value="UniProtKB"/>
</dbReference>
<dbReference type="GO" id="GO:0031681">
    <property type="term" value="F:G-protein beta-subunit binding"/>
    <property type="evidence" value="ECO:0000318"/>
    <property type="project" value="GO_Central"/>
</dbReference>
<dbReference type="GO" id="GO:0038047">
    <property type="term" value="F:morphine receptor activity"/>
    <property type="evidence" value="ECO:0000250"/>
    <property type="project" value="UniProtKB"/>
</dbReference>
<dbReference type="GO" id="GO:0042923">
    <property type="term" value="F:neuropeptide binding"/>
    <property type="evidence" value="ECO:0000318"/>
    <property type="project" value="GO_Central"/>
</dbReference>
<dbReference type="GO" id="GO:0005245">
    <property type="term" value="F:voltage-gated calcium channel activity"/>
    <property type="evidence" value="ECO:0000250"/>
    <property type="project" value="UniProtKB"/>
</dbReference>
<dbReference type="GO" id="GO:0007197">
    <property type="term" value="P:adenylate cyclase-inhibiting G protein-coupled acetylcholine receptor signaling pathway"/>
    <property type="evidence" value="ECO:0000250"/>
    <property type="project" value="UniProtKB"/>
</dbReference>
<dbReference type="GO" id="GO:0007193">
    <property type="term" value="P:adenylate cyclase-inhibiting G protein-coupled receptor signaling pathway"/>
    <property type="evidence" value="ECO:0000250"/>
    <property type="project" value="UniProtKB"/>
</dbReference>
<dbReference type="GO" id="GO:0038003">
    <property type="term" value="P:G protein-coupled opioid receptor signaling pathway"/>
    <property type="evidence" value="ECO:0000250"/>
    <property type="project" value="UniProtKB"/>
</dbReference>
<dbReference type="GO" id="GO:0051481">
    <property type="term" value="P:negative regulation of cytosolic calcium ion concentration"/>
    <property type="evidence" value="ECO:0000250"/>
    <property type="project" value="UniProtKB"/>
</dbReference>
<dbReference type="GO" id="GO:0045019">
    <property type="term" value="P:negative regulation of nitric oxide biosynthetic process"/>
    <property type="evidence" value="ECO:0000250"/>
    <property type="project" value="UniProtKB"/>
</dbReference>
<dbReference type="GO" id="GO:0061358">
    <property type="term" value="P:negative regulation of Wnt protein secretion"/>
    <property type="evidence" value="ECO:0000250"/>
    <property type="project" value="UniProtKB"/>
</dbReference>
<dbReference type="GO" id="GO:0007218">
    <property type="term" value="P:neuropeptide signaling pathway"/>
    <property type="evidence" value="ECO:0000318"/>
    <property type="project" value="GO_Central"/>
</dbReference>
<dbReference type="GO" id="GO:0007200">
    <property type="term" value="P:phospholipase C-activating G protein-coupled receptor signaling pathway"/>
    <property type="evidence" value="ECO:0000250"/>
    <property type="project" value="UniProtKB"/>
</dbReference>
<dbReference type="GO" id="GO:0070374">
    <property type="term" value="P:positive regulation of ERK1 and ERK2 cascade"/>
    <property type="evidence" value="ECO:0000250"/>
    <property type="project" value="UniProtKB"/>
</dbReference>
<dbReference type="GO" id="GO:0050769">
    <property type="term" value="P:positive regulation of neurogenesis"/>
    <property type="evidence" value="ECO:0000250"/>
    <property type="project" value="UniProtKB"/>
</dbReference>
<dbReference type="GO" id="GO:2000310">
    <property type="term" value="P:regulation of NMDA receptor activity"/>
    <property type="evidence" value="ECO:0000250"/>
    <property type="project" value="UniProtKB"/>
</dbReference>
<dbReference type="GO" id="GO:0019233">
    <property type="term" value="P:sensory perception of pain"/>
    <property type="evidence" value="ECO:0000250"/>
    <property type="project" value="UniProtKB"/>
</dbReference>
<dbReference type="CDD" id="cd15090">
    <property type="entry name" value="7tmA_Mu_opioid_R"/>
    <property type="match status" value="1"/>
</dbReference>
<dbReference type="FunFam" id="1.20.1070.10:FF:000014">
    <property type="entry name" value="Kappa-type opioid receptor 1"/>
    <property type="match status" value="1"/>
</dbReference>
<dbReference type="Gene3D" id="1.20.1070.10">
    <property type="entry name" value="Rhodopsin 7-helix transmembrane proteins"/>
    <property type="match status" value="1"/>
</dbReference>
<dbReference type="InterPro" id="IPR000276">
    <property type="entry name" value="GPCR_Rhodpsn"/>
</dbReference>
<dbReference type="InterPro" id="IPR017452">
    <property type="entry name" value="GPCR_Rhodpsn_7TM"/>
</dbReference>
<dbReference type="InterPro" id="IPR000105">
    <property type="entry name" value="Mu_opioid_rcpt"/>
</dbReference>
<dbReference type="InterPro" id="IPR001418">
    <property type="entry name" value="Opioid_rcpt"/>
</dbReference>
<dbReference type="PANTHER" id="PTHR24229:SF7">
    <property type="entry name" value="MU-TYPE OPIOID RECEPTOR"/>
    <property type="match status" value="1"/>
</dbReference>
<dbReference type="PANTHER" id="PTHR24229">
    <property type="entry name" value="NEUROPEPTIDES RECEPTOR"/>
    <property type="match status" value="1"/>
</dbReference>
<dbReference type="Pfam" id="PF00001">
    <property type="entry name" value="7tm_1"/>
    <property type="match status" value="1"/>
</dbReference>
<dbReference type="PRINTS" id="PR00237">
    <property type="entry name" value="GPCRRHODOPSN"/>
</dbReference>
<dbReference type="PRINTS" id="PR00537">
    <property type="entry name" value="MUOPIOIDR"/>
</dbReference>
<dbReference type="PRINTS" id="PR00384">
    <property type="entry name" value="OPIOIDR"/>
</dbReference>
<dbReference type="SUPFAM" id="SSF81321">
    <property type="entry name" value="Family A G protein-coupled receptor-like"/>
    <property type="match status" value="1"/>
</dbReference>
<dbReference type="PROSITE" id="PS00237">
    <property type="entry name" value="G_PROTEIN_RECEP_F1_1"/>
    <property type="match status" value="1"/>
</dbReference>
<dbReference type="PROSITE" id="PS50262">
    <property type="entry name" value="G_PROTEIN_RECEP_F1_2"/>
    <property type="match status" value="1"/>
</dbReference>
<comment type="function">
    <text evidence="1 2 3">Receptor for endogenous opioids such as beta-endorphin and endomorphin. Receptor for natural and synthetic opioids including morphine, heroin, DAMGO, fentanyl, etorphine, buprenorphin and methadone. Also activated by enkephalin peptides, such as Met-enkephalin or Met-enkephalin-Arg-Phe, with higher affinity for Met-enkephalin-Arg-Phe. Agonist binding to the receptor induces coupling to an inactive GDP-bound heterotrimeric G-protein complex and subsequent exchange of GDP for GTP in the G-protein alpha subunit leading to dissociation of the G-protein complex with the free GTP-bound G-protein alpha and the G-protein beta-gamma dimer activating downstream cellular effectors. The agonist- and cell type-specific activity is predominantly coupled to pertussis toxin-sensitive G(i) and G(o) G alpha proteins, GNAI1, GNAI2, GNAI3 and GNAO1, and to a lesser extent to pertussis toxin-insensitive G alpha proteins GNAZ and GNA15. They mediate an array of downstream cellular responses, including inhibition of adenylate cyclase activity and both N-type and L-type calcium channels, activation of inward rectifying potassium channels, mitogen-activated protein kinase (MAPK), phospholipase C (PLC), phosphoinositide/protein kinase (PKC), phosphoinositide 3-kinase (PI3K) and regulation of NF-kappa-B. Also couples to adenylate cyclase stimulatory G alpha proteins. The selective temporal coupling to G-proteins and subsequent signaling can be regulated by RGSZ proteins, such as RGS9, RGS17 and RGS4. Phosphorylation by members of the GPRK subfamily of Ser/Thr protein kinases and association with beta-arrestins is involved in short-term receptor desensitization. Beta-arrestins associate with the GPRK-phosphorylated receptor and uncouple it from the G-protein thus terminating signal transduction. The phosphorylated receptor is internalized through endocytosis via clathrin-coated pits which involves beta-arrestins. The activation of the ERK pathway occurs either in a G-protein-dependent or a beta-arrestin-dependent manner and is regulated by agonist-specific receptor phosphorylation. Acts as a class A G-protein coupled receptor (GPCR) which dissociates from beta-arrestin at or near the plasma membrane and undergoes rapid recycling. Receptor down-regulation pathways are varying with the agonist and occur dependent or independent of G-protein coupling. Endogenous ligands induce rapid desensitization, endocytosis and recycling. Heterooligomerization with other GPCRs can modulate agonist binding, signaling and trafficking properties. Involved in neurogenesis.</text>
</comment>
<comment type="subunit">
    <text evidence="1 2 3">Forms homooligomers and heterooligomers with other GPCRs, such as OPRD1, OPRK1, OPRL1, NPFFR2, ADRA2A, SSTR2, CNR1 and CCR5 (probably in dimeric forms). Interacts with heterotrimeric G proteins; interaction with a heterotrimeric complex containing GNAI1, GNB1 and GNG2 stabilizes the active conformation of the receptor and increases its affinity for endomorphin-2, the synthetic opioid peptide DAMGO and for morphinan agonists (By similarity). Interacts with PPL; the interaction disrupts agonist-mediated G-protein activation. Interacts (via C-terminus) with DNAJB4 (via C-terminus). Interacts with calmodulin; the interaction inhibits the constitutive activity of OPRM1; it abolishes basal and attenuates agonist-stimulated G-protein coupling. Interacts with FLNA, PLD2, RANBP9 and WLS and GPM6A (By similarity). Interacts with RTP4 (By similarity). Interacts with SYP and GNAS (By similarity). Interacts with RGS9, RGS17, RGS20, RGS4, PPP1R9B and HINT1.</text>
</comment>
<comment type="subcellular location">
    <subcellularLocation>
        <location evidence="3">Cell membrane</location>
        <topology evidence="3">Multi-pass membrane protein</topology>
    </subcellularLocation>
    <subcellularLocation>
        <location evidence="4">Cell projection</location>
        <location evidence="4">Axon</location>
    </subcellularLocation>
    <subcellularLocation>
        <location evidence="4">Perikaryon</location>
    </subcellularLocation>
    <subcellularLocation>
        <location evidence="4">Cell projection</location>
        <location evidence="4">Dendrite</location>
    </subcellularLocation>
    <subcellularLocation>
        <location evidence="4">Endosome</location>
    </subcellularLocation>
    <text evidence="4">Is rapidly internalized after agonist binding.</text>
</comment>
<comment type="PTM">
    <text evidence="1">Phosphorylated. Differentially phosphorylated in basal and agonist-induced conditions. Agonist-mediated phosphorylation modulates receptor internalization. Phosphorylated by GRK2 in a agonist-dependent manner. Phosphorylation at Tyr-169 requires receptor activation, is dependent on non-receptor protein tyrosine kinase Src and results in a decrease in agonist efficacy by reducing G-protein coupling efficiency. Phosphorylated on tyrosine residues; the phosphorylation is involved in agonist-induced G-protein-independent receptor down-regulation. Phosphorylation at Ser-378 is involved in G-protein-dependent but not beta-arrestin-dependent activation of the ERK pathway (By similarity).</text>
</comment>
<comment type="PTM">
    <text evidence="3">Ubiquitinated. A basal ubiquitination seems not to be related to degradation. Ubiquitination is increased upon formation of OPRM1:OPRD1 oligomers leading to proteasomal degradation; the ubiquitination is diminished by RTP4.</text>
</comment>
<comment type="similarity">
    <text evidence="6">Belongs to the G-protein coupled receptor 1 family.</text>
</comment>
<organism>
    <name type="scientific">Pan troglodytes</name>
    <name type="common">Chimpanzee</name>
    <dbReference type="NCBI Taxonomy" id="9598"/>
    <lineage>
        <taxon>Eukaryota</taxon>
        <taxon>Metazoa</taxon>
        <taxon>Chordata</taxon>
        <taxon>Craniata</taxon>
        <taxon>Vertebrata</taxon>
        <taxon>Euteleostomi</taxon>
        <taxon>Mammalia</taxon>
        <taxon>Eutheria</taxon>
        <taxon>Euarchontoglires</taxon>
        <taxon>Primates</taxon>
        <taxon>Haplorrhini</taxon>
        <taxon>Catarrhini</taxon>
        <taxon>Hominidae</taxon>
        <taxon>Pan</taxon>
    </lineage>
</organism>
<name>OPRM_PANTR</name>
<feature type="chain" id="PRO_0000069976" description="Mu-type opioid receptor">
    <location>
        <begin position="1"/>
        <end position="401"/>
    </location>
</feature>
<feature type="topological domain" description="Extracellular" evidence="3">
    <location>
        <begin position="1"/>
        <end position="69"/>
    </location>
</feature>
<feature type="transmembrane region" description="Helical; Name=1" evidence="3">
    <location>
        <begin position="70"/>
        <end position="94"/>
    </location>
</feature>
<feature type="topological domain" description="Cytoplasmic" evidence="3">
    <location>
        <begin position="95"/>
        <end position="107"/>
    </location>
</feature>
<feature type="transmembrane region" description="Helical; Name=2" evidence="3">
    <location>
        <begin position="108"/>
        <end position="132"/>
    </location>
</feature>
<feature type="topological domain" description="Extracellular" evidence="3">
    <location>
        <begin position="133"/>
        <end position="143"/>
    </location>
</feature>
<feature type="transmembrane region" description="Helical; Name=3" evidence="3">
    <location>
        <begin position="144"/>
        <end position="166"/>
    </location>
</feature>
<feature type="topological domain" description="Cytoplasmic" evidence="3">
    <location>
        <begin position="167"/>
        <end position="186"/>
    </location>
</feature>
<feature type="transmembrane region" description="Helical; Name=4" evidence="3">
    <location>
        <begin position="187"/>
        <end position="208"/>
    </location>
</feature>
<feature type="topological domain" description="Extracellular" evidence="3">
    <location>
        <begin position="209"/>
        <end position="231"/>
    </location>
</feature>
<feature type="transmembrane region" description="Helical; Name=5" evidence="3">
    <location>
        <begin position="232"/>
        <end position="256"/>
    </location>
</feature>
<feature type="topological domain" description="Cytoplasmic" evidence="3">
    <location>
        <begin position="257"/>
        <end position="280"/>
    </location>
</feature>
<feature type="transmembrane region" description="Helical; Name=6" evidence="3">
    <location>
        <begin position="281"/>
        <end position="307"/>
    </location>
</feature>
<feature type="topological domain" description="Extracellular" evidence="3">
    <location>
        <begin position="308"/>
        <end position="315"/>
    </location>
</feature>
<feature type="transmembrane region" description="Helical; Name=7" evidence="3">
    <location>
        <begin position="316"/>
        <end position="339"/>
    </location>
</feature>
<feature type="topological domain" description="Cytoplasmic" evidence="3">
    <location>
        <begin position="340"/>
        <end position="401"/>
    </location>
</feature>
<feature type="region of interest" description="Disordered" evidence="7">
    <location>
        <begin position="365"/>
        <end position="388"/>
    </location>
</feature>
<feature type="short sequence motif" description="NPxxY; plays a role in stabilizing the activated conformation of the receptor" evidence="3">
    <location>
        <begin position="335"/>
        <end position="339"/>
    </location>
</feature>
<feature type="modified residue" description="Phosphotyrosine" evidence="1">
    <location>
        <position position="169"/>
    </location>
</feature>
<feature type="modified residue" description="Phosphoserine" evidence="3">
    <location>
        <position position="366"/>
    </location>
</feature>
<feature type="modified residue" description="Phosphothreonine" evidence="1">
    <location>
        <position position="373"/>
    </location>
</feature>
<feature type="modified residue" description="Phosphoserine" evidence="1">
    <location>
        <position position="378"/>
    </location>
</feature>
<feature type="modified residue" description="Phosphothreonine" evidence="1">
    <location>
        <position position="397"/>
    </location>
</feature>
<feature type="lipid moiety-binding region" description="S-palmitoyl cysteine" evidence="5">
    <location>
        <position position="354"/>
    </location>
</feature>
<feature type="glycosylation site" description="N-linked (GlcNAc...) asparagine" evidence="5">
    <location>
        <position position="9"/>
    </location>
</feature>
<feature type="glycosylation site" description="N-linked (GlcNAc...) asparagine" evidence="5">
    <location>
        <position position="12"/>
    </location>
</feature>
<feature type="glycosylation site" description="N-linked (GlcNAc...) asparagine" evidence="5">
    <location>
        <position position="34"/>
    </location>
</feature>
<feature type="glycosylation site" description="N-linked (GlcNAc...) asparagine" evidence="5">
    <location>
        <position position="41"/>
    </location>
</feature>
<feature type="glycosylation site" description="N-linked (GlcNAc...) asparagine" evidence="5">
    <location>
        <position position="49"/>
    </location>
</feature>
<feature type="disulfide bond" evidence="6">
    <location>
        <begin position="143"/>
        <end position="220"/>
    </location>
</feature>
<accession>Q5IS39</accession>
<sequence length="401" mass="44902">MDSSAVPANASNCTDDALAYSSCSPAPSPGSWVNLSHLDGNLSDPCGPNRTDLGGRDSLCPPTGSPSMITAITIMALYSIVCVVGLFGNFLVMYVIVRYTKMKTATNIYIFNLALADALATSTLPFQSVNYLMGTWPFGTILCKIVISIDYYNMFTSIFTLCTMSVDRYIAVCHPVKALDFRTPRNAKIINVCNWILSSAIGLPVMFMATTKYRHGSIDCTLTFSHPTWYWENLLKICVFIFAFIMPVLIITVCYGLMILRLKSVRMLSGSKEKDRNLRRITRMVLVVVAVFIVCWTPIHIYVIIKALVTIPETTFQTVSWHFCIALGYTNSCLNPVLYAFLDENFKRCFREFCIPTSSNIEQQNSTRIRQNTRDHPSTANTVDRTNHQLENLEAETAPLP</sequence>